<gene>
    <name evidence="1" type="primary">lplT</name>
    <name type="ordered locus">BWG_2571</name>
</gene>
<proteinExistence type="inferred from homology"/>
<evidence type="ECO:0000255" key="1">
    <source>
        <dbReference type="HAMAP-Rule" id="MF_01585"/>
    </source>
</evidence>
<accession>C4ZZY8</accession>
<keyword id="KW-0997">Cell inner membrane</keyword>
<keyword id="KW-1003">Cell membrane</keyword>
<keyword id="KW-0445">Lipid transport</keyword>
<keyword id="KW-0472">Membrane</keyword>
<keyword id="KW-0812">Transmembrane</keyword>
<keyword id="KW-1133">Transmembrane helix</keyword>
<keyword id="KW-0813">Transport</keyword>
<sequence>MSESVHTNTSLWSKGMKAVIVAQFLSAFGDNALLFATLALLKAQFYPEWSQPILQMVFVGAYILFAPFVGQVADSFAKGRVMMFANGLKLLGAASICFGINPFLGYTLVGVGAAAYSPAKYGILGELTTGSKLVKANGLMEASTIAAILLGSVAGGVLADWHVLVALAACALAYGGAVVANIYIPKLAAARPGQSWNLINMTRSFLNACTSLWRNGETRFSLVGTSLFWGAGVTLRFLLVLWVPVALGITDNATPTYLNAMVAIGIVVGAGAAAKLVTLETVSRCMPAGILIGVVVLIFSLQHELLPAYALLMLIGVMGGFFVVPLNALLQERGKKSVGAGNAIAVQNLGENSAMLLMLGIYSLAVMIGIPVVPIGIGFGALFALAITALWIWQRRH</sequence>
<organism>
    <name type="scientific">Escherichia coli (strain K12 / MC4100 / BW2952)</name>
    <dbReference type="NCBI Taxonomy" id="595496"/>
    <lineage>
        <taxon>Bacteria</taxon>
        <taxon>Pseudomonadati</taxon>
        <taxon>Pseudomonadota</taxon>
        <taxon>Gammaproteobacteria</taxon>
        <taxon>Enterobacterales</taxon>
        <taxon>Enterobacteriaceae</taxon>
        <taxon>Escherichia</taxon>
    </lineage>
</organism>
<name>LPLT_ECOBW</name>
<protein>
    <recommendedName>
        <fullName evidence="1">Lysophospholipid transporter LplT</fullName>
    </recommendedName>
</protein>
<feature type="chain" id="PRO_1000215629" description="Lysophospholipid transporter LplT">
    <location>
        <begin position="1"/>
        <end position="397"/>
    </location>
</feature>
<feature type="topological domain" description="Periplasmic" evidence="1">
    <location>
        <begin position="1"/>
        <end position="17"/>
    </location>
</feature>
<feature type="transmembrane region" description="Helical" evidence="1">
    <location>
        <begin position="18"/>
        <end position="38"/>
    </location>
</feature>
<feature type="topological domain" description="Cytoplasmic" evidence="1">
    <location>
        <begin position="39"/>
        <end position="52"/>
    </location>
</feature>
<feature type="transmembrane region" description="Helical" evidence="1">
    <location>
        <begin position="53"/>
        <end position="73"/>
    </location>
</feature>
<feature type="topological domain" description="Periplasmic" evidence="1">
    <location>
        <begin position="74"/>
        <end position="90"/>
    </location>
</feature>
<feature type="transmembrane region" description="Helical" evidence="1">
    <location>
        <begin position="91"/>
        <end position="111"/>
    </location>
</feature>
<feature type="topological domain" description="Cytoplasmic" evidence="1">
    <location>
        <begin position="112"/>
        <end position="144"/>
    </location>
</feature>
<feature type="transmembrane region" description="Helical" evidence="1">
    <location>
        <begin position="145"/>
        <end position="165"/>
    </location>
</feature>
<feature type="topological domain" description="Periplasmic" evidence="1">
    <location>
        <position position="166"/>
    </location>
</feature>
<feature type="transmembrane region" description="Helical" evidence="1">
    <location>
        <begin position="167"/>
        <end position="187"/>
    </location>
</feature>
<feature type="topological domain" description="Cytoplasmic" evidence="1">
    <location>
        <begin position="188"/>
        <end position="226"/>
    </location>
</feature>
<feature type="transmembrane region" description="Helical" evidence="1">
    <location>
        <begin position="227"/>
        <end position="247"/>
    </location>
</feature>
<feature type="topological domain" description="Periplasmic" evidence="1">
    <location>
        <begin position="248"/>
        <end position="256"/>
    </location>
</feature>
<feature type="transmembrane region" description="Helical" evidence="1">
    <location>
        <begin position="257"/>
        <end position="277"/>
    </location>
</feature>
<feature type="topological domain" description="Cytoplasmic" evidence="1">
    <location>
        <begin position="278"/>
        <end position="280"/>
    </location>
</feature>
<feature type="transmembrane region" description="Helical" evidence="1">
    <location>
        <begin position="281"/>
        <end position="301"/>
    </location>
</feature>
<feature type="topological domain" description="Periplasmic" evidence="1">
    <location>
        <begin position="302"/>
        <end position="304"/>
    </location>
</feature>
<feature type="transmembrane region" description="Helical" evidence="1">
    <location>
        <begin position="305"/>
        <end position="325"/>
    </location>
</feature>
<feature type="topological domain" description="Cytoplasmic" evidence="1">
    <location>
        <begin position="326"/>
        <end position="343"/>
    </location>
</feature>
<feature type="transmembrane region" description="Helical" evidence="1">
    <location>
        <begin position="344"/>
        <end position="364"/>
    </location>
</feature>
<feature type="topological domain" description="Periplasmic" evidence="1">
    <location>
        <begin position="365"/>
        <end position="366"/>
    </location>
</feature>
<feature type="transmembrane region" description="Helical" evidence="1">
    <location>
        <begin position="367"/>
        <end position="387"/>
    </location>
</feature>
<feature type="topological domain" description="Cytoplasmic" evidence="1">
    <location>
        <begin position="388"/>
        <end position="397"/>
    </location>
</feature>
<dbReference type="EMBL" id="CP001396">
    <property type="protein sequence ID" value="ACR64515.1"/>
    <property type="molecule type" value="Genomic_DNA"/>
</dbReference>
<dbReference type="RefSeq" id="WP_000004616.1">
    <property type="nucleotide sequence ID" value="NC_012759.1"/>
</dbReference>
<dbReference type="SMR" id="C4ZZY8"/>
<dbReference type="KEGG" id="ebw:BWG_2571"/>
<dbReference type="HOGENOM" id="CLU_047399_0_0_6"/>
<dbReference type="GO" id="GO:0005886">
    <property type="term" value="C:plasma membrane"/>
    <property type="evidence" value="ECO:0007669"/>
    <property type="project" value="UniProtKB-SubCell"/>
</dbReference>
<dbReference type="GO" id="GO:0051978">
    <property type="term" value="F:lysophospholipid:sodium symporter activity"/>
    <property type="evidence" value="ECO:0007669"/>
    <property type="project" value="InterPro"/>
</dbReference>
<dbReference type="CDD" id="cd06173">
    <property type="entry name" value="MFS_MefA_like"/>
    <property type="match status" value="1"/>
</dbReference>
<dbReference type="FunFam" id="1.20.1250.20:FF:000091">
    <property type="entry name" value="Lysophospholipid transporter LplT"/>
    <property type="match status" value="1"/>
</dbReference>
<dbReference type="Gene3D" id="1.20.1250.20">
    <property type="entry name" value="MFS general substrate transporter like domains"/>
    <property type="match status" value="1"/>
</dbReference>
<dbReference type="HAMAP" id="MF_01585">
    <property type="entry name" value="MFS_LplT"/>
    <property type="match status" value="1"/>
</dbReference>
<dbReference type="InterPro" id="IPR023727">
    <property type="entry name" value="LysoPLipid__transptr_LplT"/>
</dbReference>
<dbReference type="InterPro" id="IPR011701">
    <property type="entry name" value="MFS"/>
</dbReference>
<dbReference type="InterPro" id="IPR036259">
    <property type="entry name" value="MFS_trans_sf"/>
</dbReference>
<dbReference type="NCBIfam" id="NF008397">
    <property type="entry name" value="PRK11195.1"/>
    <property type="match status" value="1"/>
</dbReference>
<dbReference type="PANTHER" id="PTHR43266">
    <property type="entry name" value="MACROLIDE-EFFLUX PROTEIN"/>
    <property type="match status" value="1"/>
</dbReference>
<dbReference type="PANTHER" id="PTHR43266:SF2">
    <property type="entry name" value="MAJOR FACILITATOR SUPERFAMILY (MFS) PROFILE DOMAIN-CONTAINING PROTEIN"/>
    <property type="match status" value="1"/>
</dbReference>
<dbReference type="Pfam" id="PF07690">
    <property type="entry name" value="MFS_1"/>
    <property type="match status" value="1"/>
</dbReference>
<dbReference type="SUPFAM" id="SSF103473">
    <property type="entry name" value="MFS general substrate transporter"/>
    <property type="match status" value="1"/>
</dbReference>
<comment type="function">
    <text evidence="1">Catalyzes the facilitated diffusion of 2-acyl-glycero-3-phosphoethanolamine (2-acyl-GPE) into the cell.</text>
</comment>
<comment type="subcellular location">
    <subcellularLocation>
        <location evidence="1">Cell inner membrane</location>
        <topology evidence="1">Multi-pass membrane protein</topology>
    </subcellularLocation>
</comment>
<comment type="similarity">
    <text evidence="1">Belongs to the major facilitator superfamily. LplT (TC 2.A.1.42) family.</text>
</comment>
<reference key="1">
    <citation type="journal article" date="2009" name="J. Bacteriol.">
        <title>Genomic sequencing reveals regulatory mutations and recombinational events in the widely used MC4100 lineage of Escherichia coli K-12.</title>
        <authorList>
            <person name="Ferenci T."/>
            <person name="Zhou Z."/>
            <person name="Betteridge T."/>
            <person name="Ren Y."/>
            <person name="Liu Y."/>
            <person name="Feng L."/>
            <person name="Reeves P.R."/>
            <person name="Wang L."/>
        </authorList>
    </citation>
    <scope>NUCLEOTIDE SEQUENCE [LARGE SCALE GENOMIC DNA]</scope>
    <source>
        <strain>K12 / MC4100 / BW2952</strain>
    </source>
</reference>